<reference key="1">
    <citation type="journal article" date="2009" name="Genome Res.">
        <title>Comparative genomic analyses of the human fungal pathogens Coccidioides and their relatives.</title>
        <authorList>
            <person name="Sharpton T.J."/>
            <person name="Stajich J.E."/>
            <person name="Rounsley S.D."/>
            <person name="Gardner M.J."/>
            <person name="Wortman J.R."/>
            <person name="Jordar V.S."/>
            <person name="Maiti R."/>
            <person name="Kodira C.D."/>
            <person name="Neafsey D.E."/>
            <person name="Zeng Q."/>
            <person name="Hung C.-Y."/>
            <person name="McMahan C."/>
            <person name="Muszewska A."/>
            <person name="Grynberg M."/>
            <person name="Mandel M.A."/>
            <person name="Kellner E.M."/>
            <person name="Barker B.M."/>
            <person name="Galgiani J.N."/>
            <person name="Orbach M.J."/>
            <person name="Kirkland T.N."/>
            <person name="Cole G.T."/>
            <person name="Henn M.R."/>
            <person name="Birren B.W."/>
            <person name="Taylor J.W."/>
        </authorList>
    </citation>
    <scope>NUCLEOTIDE SEQUENCE [LARGE SCALE GENOMIC DNA]</scope>
    <source>
        <strain>NAm1 / WU24</strain>
    </source>
</reference>
<keyword id="KW-0963">Cytoplasm</keyword>
<keyword id="KW-0342">GTP-binding</keyword>
<keyword id="KW-0436">Ligase</keyword>
<keyword id="KW-0460">Magnesium</keyword>
<keyword id="KW-0479">Metal-binding</keyword>
<keyword id="KW-0547">Nucleotide-binding</keyword>
<keyword id="KW-0658">Purine biosynthesis</keyword>
<keyword id="KW-1185">Reference proteome</keyword>
<organism>
    <name type="scientific">Ajellomyces capsulatus (strain NAm1 / WU24)</name>
    <name type="common">Darling's disease fungus</name>
    <name type="synonym">Histoplasma capsulatum</name>
    <dbReference type="NCBI Taxonomy" id="2059318"/>
    <lineage>
        <taxon>Eukaryota</taxon>
        <taxon>Fungi</taxon>
        <taxon>Dikarya</taxon>
        <taxon>Ascomycota</taxon>
        <taxon>Pezizomycotina</taxon>
        <taxon>Eurotiomycetes</taxon>
        <taxon>Eurotiomycetidae</taxon>
        <taxon>Onygenales</taxon>
        <taxon>Ajellomycetaceae</taxon>
        <taxon>Histoplasma</taxon>
    </lineage>
</organism>
<gene>
    <name type="ORF">HCAG_06743</name>
</gene>
<feature type="chain" id="PRO_0000399315" description="Adenylosuccinate synthetase">
    <location>
        <begin position="1"/>
        <end position="422"/>
    </location>
</feature>
<feature type="active site" description="Proton acceptor" evidence="2">
    <location>
        <position position="12"/>
    </location>
</feature>
<feature type="active site" description="Proton donor" evidence="2">
    <location>
        <position position="40"/>
    </location>
</feature>
<feature type="binding site" evidence="2">
    <location>
        <begin position="11"/>
        <end position="17"/>
    </location>
    <ligand>
        <name>GTP</name>
        <dbReference type="ChEBI" id="CHEBI:37565"/>
    </ligand>
</feature>
<feature type="binding site" description="in other chain" evidence="2">
    <location>
        <begin position="12"/>
        <end position="15"/>
    </location>
    <ligand>
        <name>IMP</name>
        <dbReference type="ChEBI" id="CHEBI:58053"/>
        <note>ligand shared between dimeric partners</note>
    </ligand>
</feature>
<feature type="binding site" evidence="2">
    <location>
        <position position="12"/>
    </location>
    <ligand>
        <name>Mg(2+)</name>
        <dbReference type="ChEBI" id="CHEBI:18420"/>
    </ligand>
</feature>
<feature type="binding site" description="in other chain" evidence="2">
    <location>
        <begin position="37"/>
        <end position="40"/>
    </location>
    <ligand>
        <name>IMP</name>
        <dbReference type="ChEBI" id="CHEBI:58053"/>
        <note>ligand shared between dimeric partners</note>
    </ligand>
</feature>
<feature type="binding site" evidence="2">
    <location>
        <begin position="39"/>
        <end position="41"/>
    </location>
    <ligand>
        <name>GTP</name>
        <dbReference type="ChEBI" id="CHEBI:37565"/>
    </ligand>
</feature>
<feature type="binding site" evidence="2">
    <location>
        <position position="39"/>
    </location>
    <ligand>
        <name>Mg(2+)</name>
        <dbReference type="ChEBI" id="CHEBI:18420"/>
    </ligand>
</feature>
<feature type="binding site" description="in other chain" evidence="2">
    <location>
        <position position="129"/>
    </location>
    <ligand>
        <name>IMP</name>
        <dbReference type="ChEBI" id="CHEBI:58053"/>
        <note>ligand shared between dimeric partners</note>
    </ligand>
</feature>
<feature type="binding site" evidence="2">
    <location>
        <position position="143"/>
    </location>
    <ligand>
        <name>IMP</name>
        <dbReference type="ChEBI" id="CHEBI:58053"/>
        <note>ligand shared between dimeric partners</note>
    </ligand>
</feature>
<feature type="binding site" description="in other chain" evidence="2">
    <location>
        <position position="219"/>
    </location>
    <ligand>
        <name>IMP</name>
        <dbReference type="ChEBI" id="CHEBI:58053"/>
        <note>ligand shared between dimeric partners</note>
    </ligand>
</feature>
<feature type="binding site" description="in other chain" evidence="2">
    <location>
        <position position="234"/>
    </location>
    <ligand>
        <name>IMP</name>
        <dbReference type="ChEBI" id="CHEBI:58053"/>
        <note>ligand shared between dimeric partners</note>
    </ligand>
</feature>
<feature type="binding site" evidence="2">
    <location>
        <begin position="294"/>
        <end position="300"/>
    </location>
    <ligand>
        <name>substrate</name>
    </ligand>
</feature>
<feature type="binding site" description="in other chain" evidence="2">
    <location>
        <position position="298"/>
    </location>
    <ligand>
        <name>IMP</name>
        <dbReference type="ChEBI" id="CHEBI:58053"/>
        <note>ligand shared between dimeric partners</note>
    </ligand>
</feature>
<feature type="binding site" evidence="2">
    <location>
        <position position="300"/>
    </location>
    <ligand>
        <name>GTP</name>
        <dbReference type="ChEBI" id="CHEBI:37565"/>
    </ligand>
</feature>
<feature type="binding site" evidence="2">
    <location>
        <begin position="326"/>
        <end position="328"/>
    </location>
    <ligand>
        <name>GTP</name>
        <dbReference type="ChEBI" id="CHEBI:37565"/>
    </ligand>
</feature>
<feature type="binding site" evidence="2">
    <location>
        <begin position="409"/>
        <end position="411"/>
    </location>
    <ligand>
        <name>GTP</name>
        <dbReference type="ChEBI" id="CHEBI:37565"/>
    </ligand>
</feature>
<protein>
    <recommendedName>
        <fullName evidence="2">Adenylosuccinate synthetase</fullName>
        <shortName evidence="2">AMPSase</shortName>
        <shortName evidence="2">AdSS</shortName>
        <ecNumber evidence="2">6.3.4.4</ecNumber>
    </recommendedName>
    <alternativeName>
        <fullName evidence="2">IMP--aspartate ligase</fullName>
    </alternativeName>
</protein>
<accession>A6R8V2</accession>
<proteinExistence type="inferred from homology"/>
<comment type="function">
    <text evidence="1">Plays an important role in the de novo pathway and in the salvage pathway of purine nucleotide biosynthesis. Catalyzes the first committed step in the biosynthesis of AMP from IMP (By similarity).</text>
</comment>
<comment type="catalytic activity">
    <reaction evidence="2">
        <text>IMP + L-aspartate + GTP = N(6)-(1,2-dicarboxyethyl)-AMP + GDP + phosphate + 2 H(+)</text>
        <dbReference type="Rhea" id="RHEA:15753"/>
        <dbReference type="ChEBI" id="CHEBI:15378"/>
        <dbReference type="ChEBI" id="CHEBI:29991"/>
        <dbReference type="ChEBI" id="CHEBI:37565"/>
        <dbReference type="ChEBI" id="CHEBI:43474"/>
        <dbReference type="ChEBI" id="CHEBI:57567"/>
        <dbReference type="ChEBI" id="CHEBI:58053"/>
        <dbReference type="ChEBI" id="CHEBI:58189"/>
        <dbReference type="EC" id="6.3.4.4"/>
    </reaction>
</comment>
<comment type="cofactor">
    <cofactor evidence="2">
        <name>Mg(2+)</name>
        <dbReference type="ChEBI" id="CHEBI:18420"/>
    </cofactor>
    <text evidence="2">Binds 1 Mg(2+) ion per subunit.</text>
</comment>
<comment type="pathway">
    <text evidence="2">Purine metabolism; AMP biosynthesis via de novo pathway; AMP from IMP: step 1/2.</text>
</comment>
<comment type="subunit">
    <text evidence="2">Homodimer.</text>
</comment>
<comment type="subcellular location">
    <subcellularLocation>
        <location evidence="2">Cytoplasm</location>
    </subcellularLocation>
</comment>
<comment type="similarity">
    <text evidence="2">Belongs to the adenylosuccinate synthetase family.</text>
</comment>
<sequence length="422" mass="46474">MVTIVLGAQFGDEGKGKITDLLSQSAALCCRAAGGHNAGHTIVHDNITYDFHILPSGLIAPDCVNLIGTGTVVHLPSFFKELDALKAKGLKDAHKRIFISDRAQVCFDLHSVVDGLEEASLAGKKVGTTGKGIGPCYSDKASRRGVRIGEVLEEGVVEDNLRKLEAGYRARFGELNYDLEEEIGRFNEYRTKLQPYVVDQMTFLEKYRSSPSILVEGANALMLDIDHGTYPYVTSSCTGVGGAIQGLTLNPTSIRSIIGVVKAYSTRVGSGPFPTEQNNAIGEKMQTIGREFGVTTGRRRRCGWLDMVMCRYSNSINHYTSINLTKLDILDDFDEIKVAVAYKLDGKRLESFPALPGVLDKVEVEYVTFPGWKSTTMGIIRWEDLPANAQRYIQFIEREMGGVPIKWIGTGPARTHMIEREV</sequence>
<evidence type="ECO:0000250" key="1"/>
<evidence type="ECO:0000255" key="2">
    <source>
        <dbReference type="HAMAP-Rule" id="MF_03125"/>
    </source>
</evidence>
<name>PURA_AJECN</name>
<dbReference type="EC" id="6.3.4.4" evidence="2"/>
<dbReference type="EMBL" id="CH476660">
    <property type="protein sequence ID" value="EDN09576.1"/>
    <property type="molecule type" value="Genomic_DNA"/>
</dbReference>
<dbReference type="RefSeq" id="XP_001539138.1">
    <property type="nucleotide sequence ID" value="XM_001539088.1"/>
</dbReference>
<dbReference type="SMR" id="A6R8V2"/>
<dbReference type="STRING" id="339724.A6R8V2"/>
<dbReference type="GeneID" id="5445635"/>
<dbReference type="KEGG" id="aje:HCAG_06743"/>
<dbReference type="VEuPathDB" id="FungiDB:HCAG_06743"/>
<dbReference type="HOGENOM" id="CLU_029848_3_2_1"/>
<dbReference type="OMA" id="FHHAKPI"/>
<dbReference type="OrthoDB" id="1065at299071"/>
<dbReference type="UniPathway" id="UPA00075">
    <property type="reaction ID" value="UER00335"/>
</dbReference>
<dbReference type="Proteomes" id="UP000009297">
    <property type="component" value="Unassembled WGS sequence"/>
</dbReference>
<dbReference type="GO" id="GO:0005737">
    <property type="term" value="C:cytoplasm"/>
    <property type="evidence" value="ECO:0007669"/>
    <property type="project" value="UniProtKB-SubCell"/>
</dbReference>
<dbReference type="GO" id="GO:0004019">
    <property type="term" value="F:adenylosuccinate synthase activity"/>
    <property type="evidence" value="ECO:0007669"/>
    <property type="project" value="UniProtKB-UniRule"/>
</dbReference>
<dbReference type="GO" id="GO:0005525">
    <property type="term" value="F:GTP binding"/>
    <property type="evidence" value="ECO:0007669"/>
    <property type="project" value="UniProtKB-UniRule"/>
</dbReference>
<dbReference type="GO" id="GO:0000287">
    <property type="term" value="F:magnesium ion binding"/>
    <property type="evidence" value="ECO:0007669"/>
    <property type="project" value="UniProtKB-UniRule"/>
</dbReference>
<dbReference type="GO" id="GO:0044208">
    <property type="term" value="P:'de novo' AMP biosynthetic process"/>
    <property type="evidence" value="ECO:0007669"/>
    <property type="project" value="UniProtKB-UniRule"/>
</dbReference>
<dbReference type="GO" id="GO:0046040">
    <property type="term" value="P:IMP metabolic process"/>
    <property type="evidence" value="ECO:0007669"/>
    <property type="project" value="TreeGrafter"/>
</dbReference>
<dbReference type="CDD" id="cd03108">
    <property type="entry name" value="AdSS"/>
    <property type="match status" value="1"/>
</dbReference>
<dbReference type="FunFam" id="1.10.300.10:FF:000001">
    <property type="entry name" value="Adenylosuccinate synthetase"/>
    <property type="match status" value="1"/>
</dbReference>
<dbReference type="FunFam" id="3.90.170.10:FF:000001">
    <property type="entry name" value="Adenylosuccinate synthetase"/>
    <property type="match status" value="1"/>
</dbReference>
<dbReference type="Gene3D" id="3.40.440.10">
    <property type="entry name" value="Adenylosuccinate Synthetase, subunit A, domain 1"/>
    <property type="match status" value="1"/>
</dbReference>
<dbReference type="Gene3D" id="1.10.300.10">
    <property type="entry name" value="Adenylosuccinate Synthetase, subunit A, domain 2"/>
    <property type="match status" value="1"/>
</dbReference>
<dbReference type="Gene3D" id="3.90.170.10">
    <property type="entry name" value="Adenylosuccinate Synthetase, subunit A, domain 3"/>
    <property type="match status" value="1"/>
</dbReference>
<dbReference type="HAMAP" id="MF_00011">
    <property type="entry name" value="Adenylosucc_synth"/>
    <property type="match status" value="1"/>
</dbReference>
<dbReference type="InterPro" id="IPR018220">
    <property type="entry name" value="Adenylosuccin_syn_GTP-bd"/>
</dbReference>
<dbReference type="InterPro" id="IPR033128">
    <property type="entry name" value="Adenylosuccin_syn_Lys_AS"/>
</dbReference>
<dbReference type="InterPro" id="IPR042109">
    <property type="entry name" value="Adenylosuccinate_synth_dom1"/>
</dbReference>
<dbReference type="InterPro" id="IPR042110">
    <property type="entry name" value="Adenylosuccinate_synth_dom2"/>
</dbReference>
<dbReference type="InterPro" id="IPR042111">
    <property type="entry name" value="Adenylosuccinate_synth_dom3"/>
</dbReference>
<dbReference type="InterPro" id="IPR001114">
    <property type="entry name" value="Adenylosuccinate_synthetase"/>
</dbReference>
<dbReference type="InterPro" id="IPR027417">
    <property type="entry name" value="P-loop_NTPase"/>
</dbReference>
<dbReference type="NCBIfam" id="NF002223">
    <property type="entry name" value="PRK01117.1"/>
    <property type="match status" value="1"/>
</dbReference>
<dbReference type="NCBIfam" id="TIGR00184">
    <property type="entry name" value="purA"/>
    <property type="match status" value="1"/>
</dbReference>
<dbReference type="PANTHER" id="PTHR11846">
    <property type="entry name" value="ADENYLOSUCCINATE SYNTHETASE"/>
    <property type="match status" value="1"/>
</dbReference>
<dbReference type="PANTHER" id="PTHR11846:SF0">
    <property type="entry name" value="ADENYLOSUCCINATE SYNTHETASE"/>
    <property type="match status" value="1"/>
</dbReference>
<dbReference type="Pfam" id="PF00709">
    <property type="entry name" value="Adenylsucc_synt"/>
    <property type="match status" value="1"/>
</dbReference>
<dbReference type="SMART" id="SM00788">
    <property type="entry name" value="Adenylsucc_synt"/>
    <property type="match status" value="1"/>
</dbReference>
<dbReference type="SUPFAM" id="SSF52540">
    <property type="entry name" value="P-loop containing nucleoside triphosphate hydrolases"/>
    <property type="match status" value="1"/>
</dbReference>
<dbReference type="PROSITE" id="PS01266">
    <property type="entry name" value="ADENYLOSUCCIN_SYN_1"/>
    <property type="match status" value="1"/>
</dbReference>
<dbReference type="PROSITE" id="PS00513">
    <property type="entry name" value="ADENYLOSUCCIN_SYN_2"/>
    <property type="match status" value="1"/>
</dbReference>